<feature type="signal peptide" evidence="2">
    <location>
        <begin position="1"/>
        <end position="27"/>
    </location>
</feature>
<feature type="chain" id="PRO_5038330331" description="Receptor protein kinase WSS1" evidence="2">
    <location>
        <begin position="28"/>
        <end position="912"/>
    </location>
</feature>
<feature type="topological domain" description="Extracellular" evidence="8">
    <location>
        <begin position="28"/>
        <end position="477"/>
    </location>
</feature>
<feature type="transmembrane region" description="Helical" evidence="2">
    <location>
        <begin position="478"/>
        <end position="498"/>
    </location>
</feature>
<feature type="topological domain" description="Cytoplasmic" evidence="8">
    <location>
        <begin position="499"/>
        <end position="912"/>
    </location>
</feature>
<feature type="repeat" description="LRR 1" evidence="2">
    <location>
        <begin position="64"/>
        <end position="88"/>
    </location>
</feature>
<feature type="repeat" description="LRR 2" evidence="2">
    <location>
        <begin position="89"/>
        <end position="111"/>
    </location>
</feature>
<feature type="repeat" description="LRR 3" evidence="2">
    <location>
        <begin position="112"/>
        <end position="134"/>
    </location>
</feature>
<feature type="repeat" description="LRR 4" evidence="2">
    <location>
        <begin position="184"/>
        <end position="208"/>
    </location>
</feature>
<feature type="repeat" description="LRR 5" evidence="2">
    <location>
        <begin position="235"/>
        <end position="261"/>
    </location>
</feature>
<feature type="repeat" description="LRR 6" evidence="2">
    <location>
        <begin position="281"/>
        <end position="303"/>
    </location>
</feature>
<feature type="repeat" description="LRR 7" evidence="2">
    <location>
        <begin position="364"/>
        <end position="388"/>
    </location>
</feature>
<feature type="repeat" description="LRR 8" evidence="2">
    <location>
        <begin position="389"/>
        <end position="411"/>
    </location>
</feature>
<feature type="repeat" description="LRR 9" evidence="2">
    <location>
        <begin position="413"/>
        <end position="438"/>
    </location>
</feature>
<feature type="domain" description="Protein kinase" evidence="3">
    <location>
        <begin position="580"/>
        <end position="859"/>
    </location>
</feature>
<feature type="region of interest" description="Disordered" evidence="5">
    <location>
        <begin position="448"/>
        <end position="472"/>
    </location>
</feature>
<feature type="active site" description="Proton acceptor" evidence="3">
    <location>
        <position position="708"/>
    </location>
</feature>
<feature type="binding site" evidence="3">
    <location>
        <begin position="586"/>
        <end position="594"/>
    </location>
    <ligand>
        <name>ATP</name>
        <dbReference type="ChEBI" id="CHEBI:30616"/>
    </ligand>
</feature>
<feature type="binding site" evidence="3">
    <location>
        <position position="607"/>
    </location>
    <ligand>
        <name>ATP</name>
        <dbReference type="ChEBI" id="CHEBI:30616"/>
    </ligand>
</feature>
<feature type="glycosylation site" description="N-linked (GlcNAc...) asparagine" evidence="4">
    <location>
        <position position="159"/>
    </location>
</feature>
<feature type="glycosylation site" description="N-linked (GlcNAc...) asparagine" evidence="4">
    <location>
        <position position="170"/>
    </location>
</feature>
<feature type="glycosylation site" description="N-linked (GlcNAc...) asparagine" evidence="4">
    <location>
        <position position="196"/>
    </location>
</feature>
<feature type="glycosylation site" description="N-linked (GlcNAc...) asparagine" evidence="4">
    <location>
        <position position="256"/>
    </location>
</feature>
<feature type="glycosylation site" description="N-linked (GlcNAc...) asparagine" evidence="4">
    <location>
        <position position="286"/>
    </location>
</feature>
<feature type="glycosylation site" description="N-linked (GlcNAc...) asparagine" evidence="4">
    <location>
        <position position="371"/>
    </location>
</feature>
<feature type="glycosylation site" description="N-linked (GlcNAc...) asparagine" evidence="4">
    <location>
        <position position="376"/>
    </location>
</feature>
<feature type="glycosylation site" description="N-linked (GlcNAc...) asparagine" evidence="4">
    <location>
        <position position="387"/>
    </location>
</feature>
<feature type="glycosylation site" description="N-linked (GlcNAc...) asparagine" evidence="4">
    <location>
        <position position="400"/>
    </location>
</feature>
<feature type="mutagenesis site" description="Water-soaked spot leaves which gradually become withered. Reduced plant height, length of panicle and seed-setting rate." evidence="6">
    <original>L</original>
    <variation>P</variation>
    <location>
        <position position="396"/>
    </location>
</feature>
<dbReference type="EC" id="2.7.11.1" evidence="1"/>
<dbReference type="EMBL" id="AC146522">
    <property type="protein sequence ID" value="AAX92784.1"/>
    <property type="molecule type" value="Genomic_DNA"/>
</dbReference>
<dbReference type="EMBL" id="DP000010">
    <property type="protein sequence ID" value="ABA93328.1"/>
    <property type="molecule type" value="Genomic_DNA"/>
</dbReference>
<dbReference type="EMBL" id="AP008217">
    <property type="protein sequence ID" value="BAF28192.1"/>
    <property type="molecule type" value="Genomic_DNA"/>
</dbReference>
<dbReference type="EMBL" id="AP014967">
    <property type="protein sequence ID" value="BAT13895.1"/>
    <property type="status" value="ALT_INIT"/>
    <property type="molecule type" value="Genomic_DNA"/>
</dbReference>
<dbReference type="EMBL" id="CM000141">
    <property type="protein sequence ID" value="EAZ29677.1"/>
    <property type="status" value="ALT_INIT"/>
    <property type="molecule type" value="Genomic_DNA"/>
</dbReference>
<dbReference type="SMR" id="Q2R560"/>
<dbReference type="EnsemblPlants" id="Os11t0448000-01">
    <property type="protein sequence ID" value="Os11t0448000-01"/>
    <property type="gene ID" value="Os11g0448000"/>
</dbReference>
<dbReference type="GeneID" id="4350438"/>
<dbReference type="Gramene" id="Os11t0448000-01">
    <property type="protein sequence ID" value="Os11t0448000-01"/>
    <property type="gene ID" value="Os11g0448000"/>
</dbReference>
<dbReference type="KEGG" id="dosa:Os11g0448000"/>
<dbReference type="KEGG" id="osa:4350438"/>
<dbReference type="eggNOG" id="ENOG502QTPG">
    <property type="taxonomic scope" value="Eukaryota"/>
</dbReference>
<dbReference type="OMA" id="YEYMSDG"/>
<dbReference type="OrthoDB" id="978612at2759"/>
<dbReference type="Proteomes" id="UP000000763">
    <property type="component" value="Chromosome 11"/>
</dbReference>
<dbReference type="Proteomes" id="UP000007752">
    <property type="component" value="Chromosome 4"/>
</dbReference>
<dbReference type="Proteomes" id="UP000059680">
    <property type="component" value="Chromosome 11"/>
</dbReference>
<dbReference type="GO" id="GO:0005886">
    <property type="term" value="C:plasma membrane"/>
    <property type="evidence" value="ECO:0000314"/>
    <property type="project" value="UniProtKB"/>
</dbReference>
<dbReference type="GO" id="GO:0005524">
    <property type="term" value="F:ATP binding"/>
    <property type="evidence" value="ECO:0007669"/>
    <property type="project" value="UniProtKB-KW"/>
</dbReference>
<dbReference type="GO" id="GO:0004674">
    <property type="term" value="F:protein serine/threonine kinase activity"/>
    <property type="evidence" value="ECO:0007669"/>
    <property type="project" value="UniProtKB-KW"/>
</dbReference>
<dbReference type="GO" id="GO:0009658">
    <property type="term" value="P:chloroplast organization"/>
    <property type="evidence" value="ECO:0000315"/>
    <property type="project" value="UniProtKB"/>
</dbReference>
<dbReference type="GO" id="GO:1900055">
    <property type="term" value="P:regulation of leaf senescence"/>
    <property type="evidence" value="ECO:0000315"/>
    <property type="project" value="UniProtKB"/>
</dbReference>
<dbReference type="GO" id="GO:2000377">
    <property type="term" value="P:regulation of reactive oxygen species metabolic process"/>
    <property type="evidence" value="ECO:0000315"/>
    <property type="project" value="UniProtKB"/>
</dbReference>
<dbReference type="CDD" id="cd14066">
    <property type="entry name" value="STKc_IRAK"/>
    <property type="match status" value="1"/>
</dbReference>
<dbReference type="FunFam" id="3.80.10.10:FF:000129">
    <property type="entry name" value="Leucine-rich repeat receptor-like kinase"/>
    <property type="match status" value="1"/>
</dbReference>
<dbReference type="FunFam" id="1.10.510.10:FF:000198">
    <property type="entry name" value="receptor protein kinase TMK1"/>
    <property type="match status" value="1"/>
</dbReference>
<dbReference type="FunFam" id="3.80.10.10:FF:000190">
    <property type="entry name" value="Receptor-like kinase TMK4"/>
    <property type="match status" value="1"/>
</dbReference>
<dbReference type="FunFam" id="3.30.200.20:FF:000039">
    <property type="entry name" value="receptor-like protein kinase FERONIA"/>
    <property type="match status" value="1"/>
</dbReference>
<dbReference type="Gene3D" id="3.30.200.20">
    <property type="entry name" value="Phosphorylase Kinase, domain 1"/>
    <property type="match status" value="1"/>
</dbReference>
<dbReference type="Gene3D" id="3.80.10.10">
    <property type="entry name" value="Ribonuclease Inhibitor"/>
    <property type="match status" value="2"/>
</dbReference>
<dbReference type="Gene3D" id="1.10.510.10">
    <property type="entry name" value="Transferase(Phosphotransferase) domain 1"/>
    <property type="match status" value="1"/>
</dbReference>
<dbReference type="InterPro" id="IPR052422">
    <property type="entry name" value="Auxin_Ser/Thr_Kinase"/>
</dbReference>
<dbReference type="InterPro" id="IPR011009">
    <property type="entry name" value="Kinase-like_dom_sf"/>
</dbReference>
<dbReference type="InterPro" id="IPR001611">
    <property type="entry name" value="Leu-rich_rpt"/>
</dbReference>
<dbReference type="InterPro" id="IPR003591">
    <property type="entry name" value="Leu-rich_rpt_typical-subtyp"/>
</dbReference>
<dbReference type="InterPro" id="IPR032675">
    <property type="entry name" value="LRR_dom_sf"/>
</dbReference>
<dbReference type="InterPro" id="IPR013210">
    <property type="entry name" value="LRR_N_plant-typ"/>
</dbReference>
<dbReference type="InterPro" id="IPR000719">
    <property type="entry name" value="Prot_kinase_dom"/>
</dbReference>
<dbReference type="InterPro" id="IPR017441">
    <property type="entry name" value="Protein_kinase_ATP_BS"/>
</dbReference>
<dbReference type="InterPro" id="IPR008271">
    <property type="entry name" value="Ser/Thr_kinase_AS"/>
</dbReference>
<dbReference type="PANTHER" id="PTHR47986">
    <property type="entry name" value="OSJNBA0070M12.3 PROTEIN"/>
    <property type="match status" value="1"/>
</dbReference>
<dbReference type="PANTHER" id="PTHR47986:SF34">
    <property type="entry name" value="RECEPTOR-LIKE KINASE TMK2"/>
    <property type="match status" value="1"/>
</dbReference>
<dbReference type="Pfam" id="PF00560">
    <property type="entry name" value="LRR_1"/>
    <property type="match status" value="1"/>
</dbReference>
<dbReference type="Pfam" id="PF13855">
    <property type="entry name" value="LRR_8"/>
    <property type="match status" value="1"/>
</dbReference>
<dbReference type="Pfam" id="PF08263">
    <property type="entry name" value="LRRNT_2"/>
    <property type="match status" value="2"/>
</dbReference>
<dbReference type="Pfam" id="PF00069">
    <property type="entry name" value="Pkinase"/>
    <property type="match status" value="1"/>
</dbReference>
<dbReference type="PRINTS" id="PR00019">
    <property type="entry name" value="LEURICHRPT"/>
</dbReference>
<dbReference type="SMART" id="SM00369">
    <property type="entry name" value="LRR_TYP"/>
    <property type="match status" value="5"/>
</dbReference>
<dbReference type="SMART" id="SM00220">
    <property type="entry name" value="S_TKc"/>
    <property type="match status" value="1"/>
</dbReference>
<dbReference type="SUPFAM" id="SSF52058">
    <property type="entry name" value="L domain-like"/>
    <property type="match status" value="1"/>
</dbReference>
<dbReference type="SUPFAM" id="SSF56112">
    <property type="entry name" value="Protein kinase-like (PK-like)"/>
    <property type="match status" value="1"/>
</dbReference>
<dbReference type="PROSITE" id="PS00107">
    <property type="entry name" value="PROTEIN_KINASE_ATP"/>
    <property type="match status" value="1"/>
</dbReference>
<dbReference type="PROSITE" id="PS50011">
    <property type="entry name" value="PROTEIN_KINASE_DOM"/>
    <property type="match status" value="1"/>
</dbReference>
<dbReference type="PROSITE" id="PS00108">
    <property type="entry name" value="PROTEIN_KINASE_ST"/>
    <property type="match status" value="1"/>
</dbReference>
<evidence type="ECO:0000250" key="1">
    <source>
        <dbReference type="UniProtKB" id="P43298"/>
    </source>
</evidence>
<evidence type="ECO:0000255" key="2"/>
<evidence type="ECO:0000255" key="3">
    <source>
        <dbReference type="PROSITE-ProRule" id="PRU00159"/>
    </source>
</evidence>
<evidence type="ECO:0000255" key="4">
    <source>
        <dbReference type="PROSITE-ProRule" id="PRU00498"/>
    </source>
</evidence>
<evidence type="ECO:0000256" key="5">
    <source>
        <dbReference type="SAM" id="MobiDB-lite"/>
    </source>
</evidence>
<evidence type="ECO:0000269" key="6">
    <source>
    </source>
</evidence>
<evidence type="ECO:0000303" key="7">
    <source>
    </source>
</evidence>
<evidence type="ECO:0000305" key="8"/>
<evidence type="ECO:0000312" key="9">
    <source>
        <dbReference type="EMBL" id="AAX92784.1"/>
    </source>
</evidence>
<evidence type="ECO:0000312" key="10">
    <source>
        <dbReference type="EMBL" id="BAF28192.1"/>
    </source>
</evidence>
<keyword id="KW-0067">ATP-binding</keyword>
<keyword id="KW-1003">Cell membrane</keyword>
<keyword id="KW-0325">Glycoprotein</keyword>
<keyword id="KW-0418">Kinase</keyword>
<keyword id="KW-0433">Leucine-rich repeat</keyword>
<keyword id="KW-0472">Membrane</keyword>
<keyword id="KW-0547">Nucleotide-binding</keyword>
<keyword id="KW-0675">Receptor</keyword>
<keyword id="KW-1185">Reference proteome</keyword>
<keyword id="KW-0677">Repeat</keyword>
<keyword id="KW-0723">Serine/threonine-protein kinase</keyword>
<keyword id="KW-0732">Signal</keyword>
<keyword id="KW-0808">Transferase</keyword>
<keyword id="KW-0812">Transmembrane</keyword>
<keyword id="KW-1133">Transmembrane helix</keyword>
<reference key="1">
    <citation type="journal article" date="2005" name="BMC Biol.">
        <title>The sequence of rice chromosomes 11 and 12, rich in disease resistance genes and recent gene duplications.</title>
        <authorList>
            <consortium name="The rice chromosomes 11 and 12 sequencing consortia"/>
        </authorList>
    </citation>
    <scope>NUCLEOTIDE SEQUENCE [LARGE SCALE GENOMIC DNA]</scope>
    <source>
        <strain>cv. Nipponbare</strain>
    </source>
</reference>
<reference key="2">
    <citation type="journal article" date="2005" name="Nature">
        <title>The map-based sequence of the rice genome.</title>
        <authorList>
            <consortium name="International rice genome sequencing project (IRGSP)"/>
        </authorList>
    </citation>
    <scope>NUCLEOTIDE SEQUENCE [LARGE SCALE GENOMIC DNA]</scope>
    <source>
        <strain>cv. Nipponbare</strain>
    </source>
</reference>
<reference key="3">
    <citation type="journal article" date="2008" name="Nucleic Acids Res.">
        <title>The rice annotation project database (RAP-DB): 2008 update.</title>
        <authorList>
            <consortium name="The rice annotation project (RAP)"/>
        </authorList>
    </citation>
    <scope>GENOME REANNOTATION</scope>
    <source>
        <strain>cv. Nipponbare</strain>
    </source>
</reference>
<reference key="4">
    <citation type="journal article" date="2013" name="Rice">
        <title>Improvement of the Oryza sativa Nipponbare reference genome using next generation sequence and optical map data.</title>
        <authorList>
            <person name="Kawahara Y."/>
            <person name="de la Bastide M."/>
            <person name="Hamilton J.P."/>
            <person name="Kanamori H."/>
            <person name="McCombie W.R."/>
            <person name="Ouyang S."/>
            <person name="Schwartz D.C."/>
            <person name="Tanaka T."/>
            <person name="Wu J."/>
            <person name="Zhou S."/>
            <person name="Childs K.L."/>
            <person name="Davidson R.M."/>
            <person name="Lin H."/>
            <person name="Quesada-Ocampo L."/>
            <person name="Vaillancourt B."/>
            <person name="Sakai H."/>
            <person name="Lee S.S."/>
            <person name="Kim J."/>
            <person name="Numa H."/>
            <person name="Itoh T."/>
            <person name="Buell C.R."/>
            <person name="Matsumoto T."/>
        </authorList>
    </citation>
    <scope>GENOME REANNOTATION</scope>
    <source>
        <strain>cv. Nipponbare</strain>
    </source>
</reference>
<reference key="5">
    <citation type="journal article" date="2005" name="PLoS Biol.">
        <title>The genomes of Oryza sativa: a history of duplications.</title>
        <authorList>
            <person name="Yu J."/>
            <person name="Wang J."/>
            <person name="Lin W."/>
            <person name="Li S."/>
            <person name="Li H."/>
            <person name="Zhou J."/>
            <person name="Ni P."/>
            <person name="Dong W."/>
            <person name="Hu S."/>
            <person name="Zeng C."/>
            <person name="Zhang J."/>
            <person name="Zhang Y."/>
            <person name="Li R."/>
            <person name="Xu Z."/>
            <person name="Li S."/>
            <person name="Li X."/>
            <person name="Zheng H."/>
            <person name="Cong L."/>
            <person name="Lin L."/>
            <person name="Yin J."/>
            <person name="Geng J."/>
            <person name="Li G."/>
            <person name="Shi J."/>
            <person name="Liu J."/>
            <person name="Lv H."/>
            <person name="Li J."/>
            <person name="Wang J."/>
            <person name="Deng Y."/>
            <person name="Ran L."/>
            <person name="Shi X."/>
            <person name="Wang X."/>
            <person name="Wu Q."/>
            <person name="Li C."/>
            <person name="Ren X."/>
            <person name="Wang J."/>
            <person name="Wang X."/>
            <person name="Li D."/>
            <person name="Liu D."/>
            <person name="Zhang X."/>
            <person name="Ji Z."/>
            <person name="Zhao W."/>
            <person name="Sun Y."/>
            <person name="Zhang Z."/>
            <person name="Bao J."/>
            <person name="Han Y."/>
            <person name="Dong L."/>
            <person name="Ji J."/>
            <person name="Chen P."/>
            <person name="Wu S."/>
            <person name="Liu J."/>
            <person name="Xiao Y."/>
            <person name="Bu D."/>
            <person name="Tan J."/>
            <person name="Yang L."/>
            <person name="Ye C."/>
            <person name="Zhang J."/>
            <person name="Xu J."/>
            <person name="Zhou Y."/>
            <person name="Yu Y."/>
            <person name="Zhang B."/>
            <person name="Zhuang S."/>
            <person name="Wei H."/>
            <person name="Liu B."/>
            <person name="Lei M."/>
            <person name="Yu H."/>
            <person name="Li Y."/>
            <person name="Xu H."/>
            <person name="Wei S."/>
            <person name="He X."/>
            <person name="Fang L."/>
            <person name="Zhang Z."/>
            <person name="Zhang Y."/>
            <person name="Huang X."/>
            <person name="Su Z."/>
            <person name="Tong W."/>
            <person name="Li J."/>
            <person name="Tong Z."/>
            <person name="Li S."/>
            <person name="Ye J."/>
            <person name="Wang L."/>
            <person name="Fang L."/>
            <person name="Lei T."/>
            <person name="Chen C.-S."/>
            <person name="Chen H.-C."/>
            <person name="Xu Z."/>
            <person name="Li H."/>
            <person name="Huang H."/>
            <person name="Zhang F."/>
            <person name="Xu H."/>
            <person name="Li N."/>
            <person name="Zhao C."/>
            <person name="Li S."/>
            <person name="Dong L."/>
            <person name="Huang Y."/>
            <person name="Li L."/>
            <person name="Xi Y."/>
            <person name="Qi Q."/>
            <person name="Li W."/>
            <person name="Zhang B."/>
            <person name="Hu W."/>
            <person name="Zhang Y."/>
            <person name="Tian X."/>
            <person name="Jiao Y."/>
            <person name="Liang X."/>
            <person name="Jin J."/>
            <person name="Gao L."/>
            <person name="Zheng W."/>
            <person name="Hao B."/>
            <person name="Liu S.-M."/>
            <person name="Wang W."/>
            <person name="Yuan L."/>
            <person name="Cao M."/>
            <person name="McDermott J."/>
            <person name="Samudrala R."/>
            <person name="Wang J."/>
            <person name="Wong G.K.-S."/>
            <person name="Yang H."/>
        </authorList>
    </citation>
    <scope>NUCLEOTIDE SEQUENCE [LARGE SCALE GENOMIC DNA]</scope>
    <source>
        <strain>cv. Nipponbare</strain>
    </source>
</reference>
<reference key="6">
    <citation type="journal article" date="2022" name="Front. Plant Sci.">
        <title>WATER-SOAKED SPOT1 controls chloroplast development and leaf senescence via regulating reactive oxygen species homeostasis in rice.</title>
        <authorList>
            <person name="Xu J."/>
            <person name="Ji Z."/>
            <person name="Wang C."/>
            <person name="Xu F."/>
            <person name="Wang F."/>
            <person name="Zheng Y."/>
            <person name="Tang Y."/>
            <person name="Wei Z."/>
            <person name="Zhao T."/>
            <person name="Zhao K."/>
        </authorList>
    </citation>
    <scope>FUNCTION</scope>
    <scope>SUBCELLULAR LOCATION</scope>
    <scope>TISSUE SPECIFICITY</scope>
    <scope>MUTAGENESIS OF LEU-396</scope>
</reference>
<accession>Q2R560</accession>
<accession>A0A0P0Y1X0</accession>
<accession>A3AQT8</accession>
<accession>Q53KI1</accession>
<name>WSS1_ORYSJ</name>
<proteinExistence type="evidence at protein level"/>
<organism>
    <name type="scientific">Oryza sativa subsp. japonica</name>
    <name type="common">Rice</name>
    <dbReference type="NCBI Taxonomy" id="39947"/>
    <lineage>
        <taxon>Eukaryota</taxon>
        <taxon>Viridiplantae</taxon>
        <taxon>Streptophyta</taxon>
        <taxon>Embryophyta</taxon>
        <taxon>Tracheophyta</taxon>
        <taxon>Spermatophyta</taxon>
        <taxon>Magnoliopsida</taxon>
        <taxon>Liliopsida</taxon>
        <taxon>Poales</taxon>
        <taxon>Poaceae</taxon>
        <taxon>BOP clade</taxon>
        <taxon>Oryzoideae</taxon>
        <taxon>Oryzeae</taxon>
        <taxon>Oryzinae</taxon>
        <taxon>Oryza</taxon>
        <taxon>Oryza sativa</taxon>
    </lineage>
</organism>
<comment type="function">
    <text evidence="6">Transmembrane kinase receptor involved in the regulation of reactive oxygen species (ROS) homeostasis, chloroplast development and leaf senescence.</text>
</comment>
<comment type="catalytic activity">
    <reaction evidence="1">
        <text>L-seryl-[protein] + ATP = O-phospho-L-seryl-[protein] + ADP + H(+)</text>
        <dbReference type="Rhea" id="RHEA:17989"/>
        <dbReference type="Rhea" id="RHEA-COMP:9863"/>
        <dbReference type="Rhea" id="RHEA-COMP:11604"/>
        <dbReference type="ChEBI" id="CHEBI:15378"/>
        <dbReference type="ChEBI" id="CHEBI:29999"/>
        <dbReference type="ChEBI" id="CHEBI:30616"/>
        <dbReference type="ChEBI" id="CHEBI:83421"/>
        <dbReference type="ChEBI" id="CHEBI:456216"/>
        <dbReference type="EC" id="2.7.11.1"/>
    </reaction>
</comment>
<comment type="catalytic activity">
    <reaction evidence="1">
        <text>L-threonyl-[protein] + ATP = O-phospho-L-threonyl-[protein] + ADP + H(+)</text>
        <dbReference type="Rhea" id="RHEA:46608"/>
        <dbReference type="Rhea" id="RHEA-COMP:11060"/>
        <dbReference type="Rhea" id="RHEA-COMP:11605"/>
        <dbReference type="ChEBI" id="CHEBI:15378"/>
        <dbReference type="ChEBI" id="CHEBI:30013"/>
        <dbReference type="ChEBI" id="CHEBI:30616"/>
        <dbReference type="ChEBI" id="CHEBI:61977"/>
        <dbReference type="ChEBI" id="CHEBI:456216"/>
        <dbReference type="EC" id="2.7.11.1"/>
    </reaction>
</comment>
<comment type="cofactor">
    <cofactor evidence="1">
        <name>Mn(2+)</name>
        <dbReference type="ChEBI" id="CHEBI:29035"/>
    </cofactor>
</comment>
<comment type="subcellular location">
    <subcellularLocation>
        <location evidence="6">Cell membrane</location>
        <topology evidence="2">Single-pass type I membrane protein</topology>
    </subcellularLocation>
</comment>
<comment type="tissue specificity">
    <text evidence="6">Expressed in young and mature leaves.</text>
</comment>
<comment type="similarity">
    <text evidence="3">Belongs to the protein kinase superfamily. Ser/Thr protein kinase family.</text>
</comment>
<comment type="sequence caution" evidence="8">
    <conflict type="erroneous initiation">
        <sequence resource="EMBL-CDS" id="BAT13895"/>
    </conflict>
    <text>Extended N-terminus.</text>
</comment>
<comment type="sequence caution" evidence="8">
    <conflict type="erroneous initiation">
        <sequence resource="EMBL-CDS" id="EAZ29677"/>
    </conflict>
    <text>Truncated N-terminus.</text>
</comment>
<protein>
    <recommendedName>
        <fullName evidence="8">Receptor protein kinase WSS1</fullName>
        <ecNumber evidence="1">2.7.11.1</ecNumber>
    </recommendedName>
    <alternativeName>
        <fullName evidence="7">Protein WATER-SOAKED SPOT1</fullName>
        <shortName evidence="7">OsWSS1</shortName>
    </alternativeName>
</protein>
<gene>
    <name evidence="7" type="primary">WSS1</name>
    <name evidence="10" type="ordered locus">Os11g0448000</name>
    <name evidence="9" type="ordered locus">LOC_Os11g26130</name>
</gene>
<sequence>MGRDARRLPLLPFLLLLLAAAAGVAESATDAEAIHDLARSVPALGWDGDNVCGFEGVTCERGGAGKVTELNLADRGLSGTLPDSLSSLTSLTALQLQGNALTGAVPSLARMGSLARLALDGNAFTSLPPDFLHGLTSLQYLTMENLPLPPWPVPDAIANCSSLDTFSASNASISGPFPAVLATLVSLRNLRLSYNNLTGGLPPELSSLIAMESLQLNNQRSDDKLSGPIDVIASMKSLKLLWIQSNKFTGPIPDLNGTQLEAFNVRDNMLTGVVPPSLTGLMSLKNVSLSNNNFQGPKPAFAAIPGQDEDSGNGFCLNTPGPCSPLTTTLLQVAEGFGYPYELAKTWKGNDPCSPAWVGIVCTSSDVSMINLSRKNLSGRISPALANLTRLARLDLSNNNLTGVIPDVLTTLPSLTVLNVANNRLTGEVPKFKPSVNVLAQGNLFGQSSGSSGGGGGSDGDSSSSDSAGGGKSKPNTGMIIGIIVAVIILFACIALLVHHRKKKNVEKFRPVSTKTSPAESEMMKIQVVGANGISNGSSAFPTELYSHVSAANSSNISELFESHGMQLSVEVLLKATNNFSEDCILGRGGFGVVFKGNLNGKLVAVKRCDSGTMGTKGQEEFLAEIDVLRKVRHRHLVALLGYCTHGNERLLVYEYMSGGTLREHLCDLQQSGFIPLTWTQRMTIALDVARGIEYLHGLAQETFIHRDLKPSNILLDQDLRAKVSDFGLVKLAKDTDKSLMTRIAGTFGYLAPEYATTGKVTTKVDVYAYGVILMEMITGRKVLDDSLPDDETHLVTIFRRNILDKEKFRKFVDPTLELSAEGWTSLLEVADLARHCTAREPYQRPDMCHCVNRLSSLVDQWKPTNIDEDDYEGETSEMGLHQQLEKWRCDDFTISDSDTFGSFNVPRKYNG</sequence>